<protein>
    <recommendedName>
        <fullName evidence="10">Translation initiation factor eIF2 assembly protein</fullName>
    </recommendedName>
    <alternativeName>
        <fullName>Cell division cycle protein 123</fullName>
    </alternativeName>
</protein>
<feature type="chain" id="PRO_0000227684" description="Translation initiation factor eIF2 assembly protein">
    <location>
        <begin position="1"/>
        <end position="360"/>
    </location>
</feature>
<feature type="binding site" evidence="1">
    <location>
        <position position="124"/>
    </location>
    <ligand>
        <name>ATP</name>
        <dbReference type="ChEBI" id="CHEBI:30616"/>
    </ligand>
</feature>
<feature type="binding site" evidence="1">
    <location>
        <position position="127"/>
    </location>
    <ligand>
        <name>ATP</name>
        <dbReference type="ChEBI" id="CHEBI:30616"/>
    </ligand>
</feature>
<feature type="binding site" evidence="1">
    <location>
        <position position="129"/>
    </location>
    <ligand>
        <name>ATP</name>
        <dbReference type="ChEBI" id="CHEBI:30616"/>
    </ligand>
</feature>
<feature type="binding site" evidence="2">
    <location>
        <position position="131"/>
    </location>
    <ligand>
        <name>ATP</name>
        <dbReference type="ChEBI" id="CHEBI:30616"/>
    </ligand>
</feature>
<feature type="binding site" evidence="2">
    <location>
        <position position="187"/>
    </location>
    <ligand>
        <name>ATP</name>
        <dbReference type="ChEBI" id="CHEBI:30616"/>
    </ligand>
</feature>
<feature type="binding site" evidence="2">
    <location>
        <position position="189"/>
    </location>
    <ligand>
        <name>ATP</name>
        <dbReference type="ChEBI" id="CHEBI:30616"/>
    </ligand>
</feature>
<feature type="binding site" evidence="1">
    <location>
        <position position="190"/>
    </location>
    <ligand>
        <name>ATP</name>
        <dbReference type="ChEBI" id="CHEBI:30616"/>
    </ligand>
</feature>
<feature type="binding site" evidence="1">
    <location>
        <position position="197"/>
    </location>
    <ligand>
        <name>ATP</name>
        <dbReference type="ChEBI" id="CHEBI:30616"/>
    </ligand>
</feature>
<feature type="binding site" evidence="1">
    <location>
        <position position="199"/>
    </location>
    <ligand>
        <name>ATP</name>
        <dbReference type="ChEBI" id="CHEBI:30616"/>
    </ligand>
</feature>
<feature type="binding site" evidence="1">
    <location>
        <position position="213"/>
    </location>
    <ligand>
        <name>ATP</name>
        <dbReference type="ChEBI" id="CHEBI:30616"/>
    </ligand>
</feature>
<feature type="binding site" evidence="2">
    <location>
        <position position="252"/>
    </location>
    <ligand>
        <name>ATP</name>
        <dbReference type="ChEBI" id="CHEBI:30616"/>
    </ligand>
</feature>
<feature type="binding site" evidence="1">
    <location>
        <position position="266"/>
    </location>
    <ligand>
        <name>ATP</name>
        <dbReference type="ChEBI" id="CHEBI:30616"/>
    </ligand>
</feature>
<feature type="binding site" evidence="1">
    <location>
        <position position="266"/>
    </location>
    <ligand>
        <name>Mg(2+)</name>
        <dbReference type="ChEBI" id="CHEBI:18420"/>
    </ligand>
</feature>
<feature type="binding site" evidence="1">
    <location>
        <position position="268"/>
    </location>
    <ligand>
        <name>ATP</name>
        <dbReference type="ChEBI" id="CHEBI:30616"/>
    </ligand>
</feature>
<feature type="binding site" evidence="1">
    <location>
        <position position="268"/>
    </location>
    <ligand>
        <name>Mg(2+)</name>
        <dbReference type="ChEBI" id="CHEBI:18420"/>
    </ligand>
</feature>
<feature type="mutagenesis site" description="Disrupts assembly of the eIF2 complex." evidence="7">
    <original>D</original>
    <variation>A</variation>
    <location>
        <position position="252"/>
    </location>
</feature>
<feature type="mutagenesis site" description="Disrupts assembly of the eIF2 complex and binding to the eIF2 complex subunit GCD11. Does not affect binding to eIF2 complex subunit SUI2." evidence="7">
    <original>DIN</original>
    <variation>AAA</variation>
    <location>
        <begin position="266"/>
        <end position="268"/>
    </location>
</feature>
<feature type="mutagenesis site" description="Reduces the interaction with DMA1." evidence="5">
    <original>T</original>
    <variation>A</variation>
    <location>
        <position position="274"/>
    </location>
</feature>
<feature type="mutagenesis site" description="Abnormal translation initiation. Sensitive to high temperature." evidence="6">
    <original>E</original>
    <variation>K</variation>
    <location>
        <position position="283"/>
    </location>
</feature>
<reference key="1">
    <citation type="journal article" date="2004" name="J. Biol. Chem.">
        <title>Cdc123 and checkpoint forkhead associated with RING proteins control the cell cycle by controlling eIF2gamma abundance.</title>
        <authorList>
            <person name="Bieganowski P."/>
            <person name="Shilinski K."/>
            <person name="Tsichlis P.N."/>
            <person name="Brenner C."/>
        </authorList>
    </citation>
    <scope>NUCLEOTIDE SEQUENCE [GENOMIC DNA]</scope>
    <scope>INTERACTION WITH DMA1; DMA2 AND GCD11</scope>
    <scope>INDUCTION</scope>
    <scope>DISRUPTION PHENOTYPE</scope>
    <scope>MUTAGENESIS OF THR-274</scope>
</reference>
<reference key="2">
    <citation type="journal article" date="1997" name="Nature">
        <title>The nucleotide sequence of Saccharomyces cerevisiae chromosome XII.</title>
        <authorList>
            <person name="Johnston M."/>
            <person name="Hillier L.W."/>
            <person name="Riles L."/>
            <person name="Albermann K."/>
            <person name="Andre B."/>
            <person name="Ansorge W."/>
            <person name="Benes V."/>
            <person name="Brueckner M."/>
            <person name="Delius H."/>
            <person name="Dubois E."/>
            <person name="Duesterhoeft A."/>
            <person name="Entian K.-D."/>
            <person name="Floeth M."/>
            <person name="Goffeau A."/>
            <person name="Hebling U."/>
            <person name="Heumann K."/>
            <person name="Heuss-Neitzel D."/>
            <person name="Hilbert H."/>
            <person name="Hilger F."/>
            <person name="Kleine K."/>
            <person name="Koetter P."/>
            <person name="Louis E.J."/>
            <person name="Messenguy F."/>
            <person name="Mewes H.-W."/>
            <person name="Miosga T."/>
            <person name="Moestl D."/>
            <person name="Mueller-Auer S."/>
            <person name="Nentwich U."/>
            <person name="Obermaier B."/>
            <person name="Piravandi E."/>
            <person name="Pohl T.M."/>
            <person name="Portetelle D."/>
            <person name="Purnelle B."/>
            <person name="Rechmann S."/>
            <person name="Rieger M."/>
            <person name="Rinke M."/>
            <person name="Rose M."/>
            <person name="Scharfe M."/>
            <person name="Scherens B."/>
            <person name="Scholler P."/>
            <person name="Schwager C."/>
            <person name="Schwarz S."/>
            <person name="Underwood A.P."/>
            <person name="Urrestarazu L.A."/>
            <person name="Vandenbol M."/>
            <person name="Verhasselt P."/>
            <person name="Vierendeels F."/>
            <person name="Voet M."/>
            <person name="Volckaert G."/>
            <person name="Voss H."/>
            <person name="Wambutt R."/>
            <person name="Wedler E."/>
            <person name="Wedler H."/>
            <person name="Zimmermann F.K."/>
            <person name="Zollner A."/>
            <person name="Hani J."/>
            <person name="Hoheisel J.D."/>
        </authorList>
    </citation>
    <scope>NUCLEOTIDE SEQUENCE [LARGE SCALE GENOMIC DNA]</scope>
    <source>
        <strain>ATCC 204508 / S288c</strain>
    </source>
</reference>
<reference key="3">
    <citation type="journal article" date="2014" name="G3 (Bethesda)">
        <title>The reference genome sequence of Saccharomyces cerevisiae: Then and now.</title>
        <authorList>
            <person name="Engel S.R."/>
            <person name="Dietrich F.S."/>
            <person name="Fisk D.G."/>
            <person name="Binkley G."/>
            <person name="Balakrishnan R."/>
            <person name="Costanzo M.C."/>
            <person name="Dwight S.S."/>
            <person name="Hitz B.C."/>
            <person name="Karra K."/>
            <person name="Nash R.S."/>
            <person name="Weng S."/>
            <person name="Wong E.D."/>
            <person name="Lloyd P."/>
            <person name="Skrzypek M.S."/>
            <person name="Miyasato S.R."/>
            <person name="Simison M."/>
            <person name="Cherry J.M."/>
        </authorList>
    </citation>
    <scope>GENOME REANNOTATION</scope>
    <source>
        <strain>ATCC 204508 / S288c</strain>
    </source>
</reference>
<reference key="4">
    <citation type="journal article" date="2007" name="Genome Res.">
        <title>Approaching a complete repository of sequence-verified protein-encoding clones for Saccharomyces cerevisiae.</title>
        <authorList>
            <person name="Hu Y."/>
            <person name="Rolfs A."/>
            <person name="Bhullar B."/>
            <person name="Murthy T.V.S."/>
            <person name="Zhu C."/>
            <person name="Berger M.F."/>
            <person name="Camargo A.A."/>
            <person name="Kelley F."/>
            <person name="McCarron S."/>
            <person name="Jepson D."/>
            <person name="Richardson A."/>
            <person name="Raphael J."/>
            <person name="Moreira D."/>
            <person name="Taycher E."/>
            <person name="Zuo D."/>
            <person name="Mohr S."/>
            <person name="Kane M.F."/>
            <person name="Williamson J."/>
            <person name="Simpson A.J.G."/>
            <person name="Bulyk M.L."/>
            <person name="Harlow E."/>
            <person name="Marsischky G."/>
            <person name="Kolodner R.D."/>
            <person name="LaBaer J."/>
        </authorList>
    </citation>
    <scope>NUCLEOTIDE SEQUENCE [GENOMIC DNA]</scope>
    <source>
        <strain>ATCC 204508 / S288c</strain>
    </source>
</reference>
<reference key="5">
    <citation type="journal article" date="2003" name="Nature">
        <title>Global analysis of protein localization in budding yeast.</title>
        <authorList>
            <person name="Huh W.-K."/>
            <person name="Falvo J.V."/>
            <person name="Gerke L.C."/>
            <person name="Carroll A.S."/>
            <person name="Howson R.W."/>
            <person name="Weissman J.S."/>
            <person name="O'Shea E.K."/>
        </authorList>
    </citation>
    <scope>SUBCELLULAR LOCATION [LARGE SCALE ANALYSIS]</scope>
</reference>
<reference key="6">
    <citation type="journal article" date="2003" name="Nature">
        <title>Global analysis of protein expression in yeast.</title>
        <authorList>
            <person name="Ghaemmaghami S."/>
            <person name="Huh W.-K."/>
            <person name="Bower K."/>
            <person name="Howson R.W."/>
            <person name="Belle A."/>
            <person name="Dephoure N."/>
            <person name="O'Shea E.K."/>
            <person name="Weissman J.S."/>
        </authorList>
    </citation>
    <scope>LEVEL OF PROTEIN EXPRESSION [LARGE SCALE ANALYSIS]</scope>
</reference>
<reference key="7">
    <citation type="journal article" date="2009" name="Science">
        <title>Global analysis of Cdk1 substrate phosphorylation sites provides insights into evolution.</title>
        <authorList>
            <person name="Holt L.J."/>
            <person name="Tuch B.B."/>
            <person name="Villen J."/>
            <person name="Johnson A.D."/>
            <person name="Gygi S.P."/>
            <person name="Morgan D.O."/>
        </authorList>
    </citation>
    <scope>IDENTIFICATION BY MASS SPECTROMETRY [LARGE SCALE ANALYSIS]</scope>
</reference>
<reference key="8">
    <citation type="journal article" date="2013" name="J. Biol. Chem.">
        <title>Translation initiation requires cell division cycle 123 (Cdc123) to facilitate biogenesis of the eukaryotic initiation factor 2 (eIF2).</title>
        <authorList>
            <person name="Perzlmaier A.F."/>
            <person name="Richter F."/>
            <person name="Seufert W."/>
        </authorList>
    </citation>
    <scope>FUNCTION</scope>
    <scope>INTERACTION WITH GCD11</scope>
    <scope>MUTAGENESIS OF GLU-283</scope>
</reference>
<reference key="9">
    <citation type="journal article" date="2015" name="Structure">
        <title>Cdc123, a cell cycle regulator needed for eIF2 assembly, is an ATP-grasp protein with unique features.</title>
        <authorList>
            <person name="Panvert M."/>
            <person name="Dubiez E."/>
            <person name="Arnold L."/>
            <person name="Perez J."/>
            <person name="Mechulam Y."/>
            <person name="Seufert W."/>
            <person name="Schmitt E."/>
        </authorList>
    </citation>
    <scope>FUNCTION</scope>
    <scope>INTERACTION WITH GCD11 AND SUI2</scope>
    <scope>MUTAGENESIS OF ASP-252 AND 266-ASP--ASN-268</scope>
</reference>
<reference key="10">
    <citation type="journal article" date="2022" name="J. Biol. Chem.">
        <title>Stepwise assembly of the eukaryotic translation initiation factor 2 complex.</title>
        <authorList>
            <person name="Vanselow S."/>
            <person name="Neumann-Arnold L."/>
            <person name="Wojciech-Moock F."/>
            <person name="Seufert W."/>
        </authorList>
    </citation>
    <scope>FUNCTION</scope>
    <scope>INTERACTION WITH GCD11; SUI2 AND SUI3</scope>
</reference>
<reference key="11">
    <citation type="journal article" date="2023" name="J. Struct. Biol.">
        <title>Binding of human Cdc123 to eIF2gamma.</title>
        <authorList>
            <person name="Cardenal Peralta C."/>
            <person name="Vandroux P."/>
            <person name="Neumann-Arnold L."/>
            <person name="Panvert M."/>
            <person name="Fagart J."/>
            <person name="Seufert W."/>
            <person name="Mechulam Y."/>
            <person name="Schmitt E."/>
        </authorList>
    </citation>
    <scope>INTERACTION WITH GCD11; SUI3 AND SUI2</scope>
    <scope>DISRUPTION PHENOTYPE</scope>
</reference>
<gene>
    <name type="primary">CDC123</name>
    <name type="ordered locus">YLR215C</name>
</gene>
<proteinExistence type="evidence at protein level"/>
<accession>Q05791</accession>
<accession>D6VYL6</accession>
<organism>
    <name type="scientific">Saccharomyces cerevisiae (strain ATCC 204508 / S288c)</name>
    <name type="common">Baker's yeast</name>
    <dbReference type="NCBI Taxonomy" id="559292"/>
    <lineage>
        <taxon>Eukaryota</taxon>
        <taxon>Fungi</taxon>
        <taxon>Dikarya</taxon>
        <taxon>Ascomycota</taxon>
        <taxon>Saccharomycotina</taxon>
        <taxon>Saccharomycetes</taxon>
        <taxon>Saccharomycetales</taxon>
        <taxon>Saccharomycetaceae</taxon>
        <taxon>Saccharomyces</taxon>
    </lineage>
</organism>
<comment type="function">
    <text evidence="6 7 8">ATP-dependent protein-folding chaperone for the eIF2 complex (PubMed:23775072, PubMed:26211610). Binds to the gamma subunit of the eIF2 complex which allows the subunit to assemble with the alpha and beta subunits (PubMed:23775072, PubMed:35031321).</text>
</comment>
<comment type="subunit">
    <text evidence="5 6 7 8 9">Interacts with the eIF2 complex gamma subunit GCD11 (via C-terminus); the interaction is direct and appears to be specific for an unassembled form of GCD11 (PubMed:15319434, PubMed:23775072, PubMed:26211610, PubMed:35031321, PubMed:37507029). Interacts with the eIF2 complex alpha subunit SUI2; the interaction is direct (PubMed:26211610, PubMed:35031321, PubMed:37507029). Interacts with the eIF2 beta complex subunit SUI3 (PubMed:35031321, PubMed:37507029). Interacts with DMA1 (PubMed:15319434). Interacts with DMA2 (PubMed:15319434).</text>
</comment>
<comment type="interaction">
    <interactant intactId="EBI-34676">
        <id>Q05791</id>
    </interactant>
    <interactant intactId="EBI-24686">
        <id>P38823</id>
        <label>DMA1</label>
    </interactant>
    <organismsDiffer>false</organismsDiffer>
    <experiments>3</experiments>
</comment>
<comment type="interaction">
    <interactant intactId="EBI-34676">
        <id>Q05791</id>
    </interactant>
    <interactant intactId="EBI-8924">
        <id>P32481</id>
        <label>GCD11</label>
    </interactant>
    <organismsDiffer>false</organismsDiffer>
    <experiments>11</experiments>
</comment>
<comment type="subcellular location">
    <subcellularLocation>
        <location evidence="3">Cytoplasm</location>
    </subcellularLocation>
</comment>
<comment type="induction">
    <text evidence="5">Expressed during exponential growth and repressed in stationary phase (at protein level) (PubMed:15319434). Levels not affected by the presence of mating pheromone (at protein level) (PubMed:15319434).</text>
</comment>
<comment type="disruption phenotype">
    <text evidence="5 9">Inviable.</text>
</comment>
<comment type="miscellaneous">
    <text evidence="4">Present with 4850 molecules/cell in log phase SD medium.</text>
</comment>
<comment type="similarity">
    <text evidence="10">Belongs to the CDC123 family.</text>
</comment>
<sequence length="360" mass="41852">MSSQEYTTFIDIPVTRAQVEHCSYSFWSSLYPKYVPKSIVLKSLPKKFIQYLEQDGIKLPQEENSRSVYTEEIIRNEDNDYSDWEDDEDTATEFVQEVEPLIDFPELHQKLKDALNELGAVAPKLNWSAPRDATWILPNNTMKCNEVNELYLLLNASNYIMHDLQRAFKGCVDGDDIKGLKFDLVLRQWCDMNPALEFRVFVKNAHIVGATQRDLNYYDYLDELSDTFKDLIDEIVHDVVLPKFPDKSFVLDVYIPRPFNKIFIVDINPFARKTDSLLFSWNEIAAIAPPKNDVEDYELRLVTRHNTGRFASKEHSENHVPQDLVEASLNPEAIRELTQKWKELLSQQAKEESSDSENET</sequence>
<name>CD123_YEAST</name>
<keyword id="KW-0067">ATP-binding</keyword>
<keyword id="KW-0143">Chaperone</keyword>
<keyword id="KW-0963">Cytoplasm</keyword>
<keyword id="KW-0460">Magnesium</keyword>
<keyword id="KW-0479">Metal-binding</keyword>
<keyword id="KW-0547">Nucleotide-binding</keyword>
<keyword id="KW-1185">Reference proteome</keyword>
<evidence type="ECO:0000250" key="1">
    <source>
        <dbReference type="UniProtKB" id="O75794"/>
    </source>
</evidence>
<evidence type="ECO:0000250" key="2">
    <source>
        <dbReference type="UniProtKB" id="Q9P7N5"/>
    </source>
</evidence>
<evidence type="ECO:0000269" key="3">
    <source>
    </source>
</evidence>
<evidence type="ECO:0000269" key="4">
    <source>
    </source>
</evidence>
<evidence type="ECO:0000269" key="5">
    <source>
    </source>
</evidence>
<evidence type="ECO:0000269" key="6">
    <source>
    </source>
</evidence>
<evidence type="ECO:0000269" key="7">
    <source>
    </source>
</evidence>
<evidence type="ECO:0000269" key="8">
    <source>
    </source>
</evidence>
<evidence type="ECO:0000269" key="9">
    <source>
    </source>
</evidence>
<evidence type="ECO:0000305" key="10"/>
<dbReference type="EMBL" id="BK005577">
    <property type="protein sequence ID" value="DAA05592.1"/>
    <property type="molecule type" value="Genomic_DNA"/>
</dbReference>
<dbReference type="EMBL" id="U14913">
    <property type="protein sequence ID" value="AAB67444.1"/>
    <property type="molecule type" value="Genomic_DNA"/>
</dbReference>
<dbReference type="EMBL" id="AY557956">
    <property type="protein sequence ID" value="AAS56282.1"/>
    <property type="molecule type" value="Genomic_DNA"/>
</dbReference>
<dbReference type="EMBL" id="BK006945">
    <property type="protein sequence ID" value="DAA09532.1"/>
    <property type="molecule type" value="Genomic_DNA"/>
</dbReference>
<dbReference type="PIR" id="S48566">
    <property type="entry name" value="S48566"/>
</dbReference>
<dbReference type="RefSeq" id="NP_013316.1">
    <property type="nucleotide sequence ID" value="NM_001182102.1"/>
</dbReference>
<dbReference type="SMR" id="Q05791"/>
<dbReference type="BioGRID" id="31483">
    <property type="interactions" value="199"/>
</dbReference>
<dbReference type="DIP" id="DIP-1886N"/>
<dbReference type="FunCoup" id="Q05791">
    <property type="interactions" value="862"/>
</dbReference>
<dbReference type="IntAct" id="Q05791">
    <property type="interactions" value="8"/>
</dbReference>
<dbReference type="MINT" id="Q05791"/>
<dbReference type="STRING" id="4932.YLR215C"/>
<dbReference type="iPTMnet" id="Q05791"/>
<dbReference type="PaxDb" id="4932-YLR215C"/>
<dbReference type="PeptideAtlas" id="Q05791"/>
<dbReference type="EnsemblFungi" id="YLR215C_mRNA">
    <property type="protein sequence ID" value="YLR215C"/>
    <property type="gene ID" value="YLR215C"/>
</dbReference>
<dbReference type="GeneID" id="850912"/>
<dbReference type="KEGG" id="sce:YLR215C"/>
<dbReference type="AGR" id="SGD:S000004205"/>
<dbReference type="SGD" id="S000004205">
    <property type="gene designation" value="CDC123"/>
</dbReference>
<dbReference type="VEuPathDB" id="FungiDB:YLR215C"/>
<dbReference type="eggNOG" id="KOG2983">
    <property type="taxonomic scope" value="Eukaryota"/>
</dbReference>
<dbReference type="GeneTree" id="ENSGT00390000003057"/>
<dbReference type="HOGENOM" id="CLU_034402_2_0_1"/>
<dbReference type="InParanoid" id="Q05791"/>
<dbReference type="OMA" id="TFPDPNF"/>
<dbReference type="OrthoDB" id="360540at2759"/>
<dbReference type="BioCyc" id="YEAST:G3O-32331-MONOMER"/>
<dbReference type="BioGRID-ORCS" id="850912">
    <property type="hits" value="1 hit in 10 CRISPR screens"/>
</dbReference>
<dbReference type="PRO" id="PR:Q05791"/>
<dbReference type="Proteomes" id="UP000002311">
    <property type="component" value="Chromosome XII"/>
</dbReference>
<dbReference type="RNAct" id="Q05791">
    <property type="molecule type" value="protein"/>
</dbReference>
<dbReference type="GO" id="GO:0005737">
    <property type="term" value="C:cytoplasm"/>
    <property type="evidence" value="ECO:0007005"/>
    <property type="project" value="SGD"/>
</dbReference>
<dbReference type="GO" id="GO:0005524">
    <property type="term" value="F:ATP binding"/>
    <property type="evidence" value="ECO:0000314"/>
    <property type="project" value="UniProtKB"/>
</dbReference>
<dbReference type="GO" id="GO:0000287">
    <property type="term" value="F:magnesium ion binding"/>
    <property type="evidence" value="ECO:0000314"/>
    <property type="project" value="UniProtKB"/>
</dbReference>
<dbReference type="GO" id="GO:0044183">
    <property type="term" value="F:protein folding chaperone"/>
    <property type="evidence" value="ECO:0000315"/>
    <property type="project" value="UniProtKB"/>
</dbReference>
<dbReference type="GO" id="GO:1905143">
    <property type="term" value="P:eukaryotic translation initiation factor 2 complex assembly"/>
    <property type="evidence" value="ECO:0000315"/>
    <property type="project" value="SGD"/>
</dbReference>
<dbReference type="InterPro" id="IPR009772">
    <property type="entry name" value="CDC123"/>
</dbReference>
<dbReference type="PANTHER" id="PTHR15323:SF6">
    <property type="entry name" value="CELL DIVISION CYCLE PROTEIN 123 HOMOLOG"/>
    <property type="match status" value="1"/>
</dbReference>
<dbReference type="PANTHER" id="PTHR15323">
    <property type="entry name" value="D123 PROTEIN"/>
    <property type="match status" value="1"/>
</dbReference>
<dbReference type="Pfam" id="PF07065">
    <property type="entry name" value="D123"/>
    <property type="match status" value="1"/>
</dbReference>
<dbReference type="PIRSF" id="PIRSF007807">
    <property type="entry name" value="Cdc123"/>
    <property type="match status" value="1"/>
</dbReference>